<protein>
    <recommendedName>
        <fullName>Genome polyprotein</fullName>
    </recommendedName>
    <component>
        <recommendedName>
            <fullName>Nuclear inclusion protein A</fullName>
            <shortName>NI-A</shortName>
            <shortName>NIA</shortName>
            <ecNumber>3.4.22.44</ecNumber>
        </recommendedName>
        <alternativeName>
            <fullName>49 kDa proteinase</fullName>
            <shortName>49 kDa-Pro</shortName>
        </alternativeName>
    </component>
    <component>
        <recommendedName>
            <fullName>Nuclear inclusion protein B</fullName>
            <shortName>NI-B</shortName>
            <shortName>NIB</shortName>
        </recommendedName>
        <alternativeName>
            <fullName>RNA-directed RNA polymerase</fullName>
            <ecNumber>2.7.7.48</ecNumber>
        </alternativeName>
    </component>
    <component>
        <recommendedName>
            <fullName>Capsid protein</fullName>
            <shortName>CP</shortName>
        </recommendedName>
        <alternativeName>
            <fullName>Coat protein</fullName>
        </alternativeName>
    </component>
</protein>
<dbReference type="EC" id="3.4.22.44"/>
<dbReference type="EC" id="2.7.7.48"/>
<dbReference type="EMBL" id="X78485">
    <property type="protein sequence ID" value="CAA55237.1"/>
    <property type="molecule type" value="mRNA"/>
</dbReference>
<dbReference type="SMR" id="Q65729"/>
<dbReference type="GO" id="GO:0019028">
    <property type="term" value="C:viral capsid"/>
    <property type="evidence" value="ECO:0007669"/>
    <property type="project" value="UniProtKB-KW"/>
</dbReference>
<dbReference type="GO" id="GO:0008234">
    <property type="term" value="F:cysteine-type peptidase activity"/>
    <property type="evidence" value="ECO:0007669"/>
    <property type="project" value="UniProtKB-KW"/>
</dbReference>
<dbReference type="GO" id="GO:0000166">
    <property type="term" value="F:nucleotide binding"/>
    <property type="evidence" value="ECO:0007669"/>
    <property type="project" value="UniProtKB-KW"/>
</dbReference>
<dbReference type="GO" id="GO:0003723">
    <property type="term" value="F:RNA binding"/>
    <property type="evidence" value="ECO:0007669"/>
    <property type="project" value="InterPro"/>
</dbReference>
<dbReference type="GO" id="GO:0003968">
    <property type="term" value="F:RNA-directed RNA polymerase activity"/>
    <property type="evidence" value="ECO:0007669"/>
    <property type="project" value="UniProtKB-KW"/>
</dbReference>
<dbReference type="GO" id="GO:0006351">
    <property type="term" value="P:DNA-templated transcription"/>
    <property type="evidence" value="ECO:0007669"/>
    <property type="project" value="InterPro"/>
</dbReference>
<dbReference type="GO" id="GO:0006508">
    <property type="term" value="P:proteolysis"/>
    <property type="evidence" value="ECO:0007669"/>
    <property type="project" value="UniProtKB-KW"/>
</dbReference>
<dbReference type="GO" id="GO:0039694">
    <property type="term" value="P:viral RNA genome replication"/>
    <property type="evidence" value="ECO:0007669"/>
    <property type="project" value="InterPro"/>
</dbReference>
<dbReference type="CDD" id="cd23175">
    <property type="entry name" value="ps-ssRNAv_Potyviridae_RdRp"/>
    <property type="match status" value="1"/>
</dbReference>
<dbReference type="Gene3D" id="3.30.70.270">
    <property type="match status" value="1"/>
</dbReference>
<dbReference type="Gene3D" id="2.40.10.10">
    <property type="entry name" value="Trypsin-like serine proteases"/>
    <property type="match status" value="1"/>
</dbReference>
<dbReference type="InterPro" id="IPR043502">
    <property type="entry name" value="DNA/RNA_pol_sf"/>
</dbReference>
<dbReference type="InterPro" id="IPR009003">
    <property type="entry name" value="Peptidase_S1_PA"/>
</dbReference>
<dbReference type="InterPro" id="IPR043504">
    <property type="entry name" value="Peptidase_S1_PA_chymotrypsin"/>
</dbReference>
<dbReference type="InterPro" id="IPR001592">
    <property type="entry name" value="Poty_coat"/>
</dbReference>
<dbReference type="InterPro" id="IPR001730">
    <property type="entry name" value="Potyv_NIa-pro_dom"/>
</dbReference>
<dbReference type="InterPro" id="IPR043128">
    <property type="entry name" value="Rev_trsase/Diguanyl_cyclase"/>
</dbReference>
<dbReference type="InterPro" id="IPR001205">
    <property type="entry name" value="RNA-dir_pol_C"/>
</dbReference>
<dbReference type="InterPro" id="IPR007094">
    <property type="entry name" value="RNA-dir_pol_PSvirus"/>
</dbReference>
<dbReference type="Pfam" id="PF00863">
    <property type="entry name" value="Peptidase_C4"/>
    <property type="match status" value="1"/>
</dbReference>
<dbReference type="Pfam" id="PF00767">
    <property type="entry name" value="Poty_coat"/>
    <property type="match status" value="1"/>
</dbReference>
<dbReference type="Pfam" id="PF00680">
    <property type="entry name" value="RdRP_1"/>
    <property type="match status" value="1"/>
</dbReference>
<dbReference type="SUPFAM" id="SSF56672">
    <property type="entry name" value="DNA/RNA polymerases"/>
    <property type="match status" value="1"/>
</dbReference>
<dbReference type="SUPFAM" id="SSF50494">
    <property type="entry name" value="Trypsin-like serine proteases"/>
    <property type="match status" value="1"/>
</dbReference>
<dbReference type="PROSITE" id="PS51436">
    <property type="entry name" value="POTYVIRUS_NIA_PRO"/>
    <property type="match status" value="1"/>
</dbReference>
<dbReference type="PROSITE" id="PS50507">
    <property type="entry name" value="RDRP_SSRNA_POS"/>
    <property type="match status" value="1"/>
</dbReference>
<comment type="function">
    <molecule>Nuclear inclusion protein A</molecule>
    <text evidence="2">Has RNA-binding and proteolytic activities.</text>
</comment>
<comment type="function">
    <molecule>Nuclear inclusion protein B</molecule>
    <text>An RNA-dependent RNA polymerase that plays an essential role in the virus replication.</text>
</comment>
<comment type="function">
    <molecule>Capsid protein</molecule>
    <text evidence="2">Involved in aphid transmission, cell-to-cell and systemis movement, encapsidation of the viral RNA and in the regulation of viral RNA amplification.</text>
</comment>
<comment type="catalytic activity">
    <reaction evidence="3">
        <text>RNA(n) + a ribonucleoside 5'-triphosphate = RNA(n+1) + diphosphate</text>
        <dbReference type="Rhea" id="RHEA:21248"/>
        <dbReference type="Rhea" id="RHEA-COMP:14527"/>
        <dbReference type="Rhea" id="RHEA-COMP:17342"/>
        <dbReference type="ChEBI" id="CHEBI:33019"/>
        <dbReference type="ChEBI" id="CHEBI:61557"/>
        <dbReference type="ChEBI" id="CHEBI:140395"/>
        <dbReference type="EC" id="2.7.7.48"/>
    </reaction>
</comment>
<comment type="catalytic activity">
    <reaction evidence="2">
        <text>Hydrolyzes glutaminyl bonds, and activity is further restricted by preferences for the amino acids in P6 - P1' that vary with the species of potyvirus, e.g. Glu-Xaa-Xaa-Tyr-Xaa-Gln-|-(Ser or Gly) for the enzyme from tobacco etch virus. The natural substrate is the viral polyprotein, but other proteins and oligopeptides containing the appropriate consensus sequence are also cleaved.</text>
        <dbReference type="EC" id="3.4.22.44"/>
    </reaction>
</comment>
<comment type="subcellular location">
    <molecule>Capsid protein</molecule>
    <subcellularLocation>
        <location evidence="6">Virion</location>
    </subcellularLocation>
</comment>
<comment type="PTM">
    <molecule>Genome polyprotein</molecule>
    <text evidence="1">Genome polyprotein of potyviruses undergoes post-translational proteolytic processing by the main proteinase NIa-pro resulting in the production of at least ten individual proteins. The P1 proteinase and the HC-pro cleave only their respective C-termini autocatalytically. 6K1 is essential for proper proteolytic separation of P3 from CI (By similarity).</text>
</comment>
<comment type="similarity">
    <text evidence="6">Belongs to the potyviridae genome polyprotein family.</text>
</comment>
<keyword id="KW-0167">Capsid protein</keyword>
<keyword id="KW-0378">Hydrolase</keyword>
<keyword id="KW-0547">Nucleotide-binding</keyword>
<keyword id="KW-0548">Nucleotidyltransferase</keyword>
<keyword id="KW-0645">Protease</keyword>
<keyword id="KW-0696">RNA-directed RNA polymerase</keyword>
<keyword id="KW-0788">Thiol protease</keyword>
<keyword id="KW-0808">Transferase</keyword>
<keyword id="KW-0693">Viral RNA replication</keyword>
<keyword id="KW-0946">Virion</keyword>
<reference key="1">
    <citation type="journal article" date="1995" name="Eur. J. Plant Pathol.">
        <title>Sequence of the 3'-terminal region of the RNA of a mite transmitted potyvirus from Hordeum murinum L.</title>
        <authorList>
            <person name="Schubert J."/>
            <person name="Rabenstein F."/>
        </authorList>
        <dbReference type="AGRICOLA" id="IND20484543"/>
    </citation>
    <scope>NUCLEOTIDE SEQUENCE [MRNA]</scope>
</reference>
<reference key="2">
    <citation type="journal article" date="2001" name="Virus Res.">
        <title>Potyvirus proteins: a wealth of functions.</title>
        <authorList>
            <person name="Urcuqui-Inchima S."/>
            <person name="Haenni A.L."/>
            <person name="Bernardi F."/>
        </authorList>
    </citation>
    <scope>REVIEW</scope>
</reference>
<evidence type="ECO:0000250" key="1"/>
<evidence type="ECO:0000250" key="2">
    <source>
        <dbReference type="UniProtKB" id="P04517"/>
    </source>
</evidence>
<evidence type="ECO:0000255" key="3">
    <source>
        <dbReference type="PROSITE-ProRule" id="PRU00539"/>
    </source>
</evidence>
<evidence type="ECO:0000255" key="4">
    <source>
        <dbReference type="PROSITE-ProRule" id="PRU00766"/>
    </source>
</evidence>
<evidence type="ECO:0000256" key="5">
    <source>
        <dbReference type="SAM" id="MobiDB-lite"/>
    </source>
</evidence>
<evidence type="ECO:0000305" key="6"/>
<feature type="chain" id="PRO_0000040243" description="Nuclear inclusion protein A" evidence="1">
    <location>
        <begin position="1" status="less than"/>
        <end position="108"/>
    </location>
</feature>
<feature type="chain" id="PRO_0000419993" description="Genome polyprotein">
    <location>
        <begin position="1"/>
        <end position="942"/>
    </location>
</feature>
<feature type="chain" id="PRO_0000040244" description="Nuclear inclusion protein B" evidence="1">
    <location>
        <begin position="109"/>
        <end position="606"/>
    </location>
</feature>
<feature type="chain" id="PRO_0000040245" description="Capsid protein" evidence="1">
    <location>
        <begin position="607"/>
        <end position="942"/>
    </location>
</feature>
<feature type="domain" description="Peptidase C4" evidence="4">
    <location>
        <begin position="1"/>
        <end position="90"/>
    </location>
</feature>
<feature type="domain" description="RdRp catalytic" evidence="3">
    <location>
        <begin position="349"/>
        <end position="472"/>
    </location>
</feature>
<feature type="region of interest" description="Disordered" evidence="5">
    <location>
        <begin position="633"/>
        <end position="678"/>
    </location>
</feature>
<feature type="compositionally biased region" description="Low complexity" evidence="5">
    <location>
        <begin position="659"/>
        <end position="669"/>
    </location>
</feature>
<feature type="active site" description="For nuclear inclusion protein A activity" evidence="4">
    <location>
        <position position="26"/>
    </location>
</feature>
<feature type="site" description="Cleavage; by NIa-pro" evidence="1">
    <location>
        <begin position="108"/>
        <end position="109"/>
    </location>
</feature>
<feature type="site" description="Cleavage; by NIa-pro" evidence="1">
    <location>
        <begin position="606"/>
        <end position="607"/>
    </location>
</feature>
<feature type="non-terminal residue">
    <location>
        <position position="1"/>
    </location>
</feature>
<sequence length="942" mass="105547">ETEITPYGENEELLWRHRITTEVGDCGATMVALSDQKIVGFHSLGGISMNYFVPVTQELLDFLNSKTEKPLVPWRFSEDQVDVGGLYIHNDFDKFPFVKTIQKLVGFQNGHMIKYCGEGFTPVARSENRLSRQHVISGQRESFIHFVEASAKWRPIVTPMLGRLQPSALNREAYYKDVLKYDKPIRLGTVHEEAFQSAVINVIRILENAGFERGGVKACFDYGKIFNDLNLDAAMGALYAGKKKDYFVEATDEEIEEMFLRSAGKICANGHGVWSALLKAELRPAEKVAANKTRTFTSAPIDILFGAKAVVDDFNKQFYKRHLLGPWTVGINKFNKGWDLLARSLMRYEWFIDADGSQFDSSITPLLMNAVLTIRLYFMERDDITELMLRNLYTQIISTCMLAEDGLIVQKHRGNNSGQPSTVVDNTLCLMIAMEYARQRAISDGHLNMQMRYVCNGDDLLINANEEAKEVVQNKYEQYIKELELNYCFDDAFQSIEGVEFMSHKFMLRNGIYIPKLARHRIVAILEWQRSAEPQAIKSAILAACVEAFGYDDSTELIREYAISLEPVWGSFLPTDGEIEQLYLEGIAKQEVARCLAGVDDVCKFESAAPGTNEAVDEMLKAAGDDEALARANATSTSDTIPPARNVGADTTTPAKANPPSGRRPSSRSLIDNSIGGNGVQDVADRTSGIVFPVPTRKSTSLYLTPKVKLRATTEELRKYESTSLNPQQIDLRYSTQQELNDWIKASADGLGQTEEAFIDNILPGWIVHCIVNTTSSENRKAGSWRCVTNAGTADEEQVLYDIEPMYSAANPTMRAIMRHFSDLAGLVIAESFKQGRPLIPKGYIKAGVLDASSAARACDFVVRDRHDTATFVQVQNQVLVNRVSGITNWLFAQQCLALVLTRTWRAMTLRCRRGHPQPRLSASFLEVSTSCRARRRLGVQR</sequence>
<accession>Q65729</accession>
<name>POLG_BSTVG</name>
<organism>
    <name type="scientific">Brome streak virus (strain German)</name>
    <name type="common">BStV</name>
    <name type="synonym">Brome streak mosaic rymovirus</name>
    <dbReference type="NCBI Taxonomy" id="117139"/>
    <lineage>
        <taxon>Viruses</taxon>
        <taxon>Riboviria</taxon>
        <taxon>Orthornavirae</taxon>
        <taxon>Pisuviricota</taxon>
        <taxon>Stelpaviricetes</taxon>
        <taxon>Patatavirales</taxon>
        <taxon>Potyviridae</taxon>
        <taxon>Tritimovirus</taxon>
        <taxon>Brome streak mosaic virus</taxon>
    </lineage>
</organism>
<proteinExistence type="evidence at transcript level"/>
<organismHost>
    <name type="scientific">Bromus</name>
    <dbReference type="NCBI Taxonomy" id="4501"/>
</organismHost>
<organismHost>
    <name type="scientific">Hordeum murinum</name>
    <name type="common">Mouse barley</name>
    <name type="synonym">Critesion murinum</name>
    <dbReference type="NCBI Taxonomy" id="97361"/>
</organismHost>